<organism>
    <name type="scientific">Dendroaspis angusticeps</name>
    <name type="common">Eastern green mamba</name>
    <name type="synonym">Naja angusticeps</name>
    <dbReference type="NCBI Taxonomy" id="8618"/>
    <lineage>
        <taxon>Eukaryota</taxon>
        <taxon>Metazoa</taxon>
        <taxon>Chordata</taxon>
        <taxon>Craniata</taxon>
        <taxon>Vertebrata</taxon>
        <taxon>Euteleostomi</taxon>
        <taxon>Lepidosauria</taxon>
        <taxon>Squamata</taxon>
        <taxon>Bifurcata</taxon>
        <taxon>Unidentata</taxon>
        <taxon>Episquamata</taxon>
        <taxon>Toxicofera</taxon>
        <taxon>Serpentes</taxon>
        <taxon>Colubroidea</taxon>
        <taxon>Elapidae</taxon>
        <taxon>Elapinae</taxon>
        <taxon>Dendroaspis</taxon>
    </lineage>
</organism>
<accession>P00980</accession>
<reference key="1">
    <citation type="journal article" date="1980" name="Hoppe-Seyler's Z. Physiol. Chem.">
        <title>Snake venoms. The amino acid sequences of two proteinase inhibitor homologues from Dendroaspis angusticeps venom.</title>
        <authorList>
            <person name="Joubert F.J."/>
            <person name="Taljaard N."/>
        </authorList>
    </citation>
    <scope>PROTEIN SEQUENCE</scope>
    <scope>PYROGLUTAMATE FORMATION AT GLN-1</scope>
    <source>
        <tissue>Venom</tissue>
    </source>
</reference>
<reference key="2">
    <citation type="journal article" date="2001" name="Toxicon">
        <title>Twenty years of dendrotoxins.</title>
        <authorList>
            <person name="Harvey A.L."/>
        </authorList>
    </citation>
    <scope>REVIEW</scope>
    <scope>FUNCTION</scope>
</reference>
<reference key="3">
    <citation type="journal article" date="2013" name="Mar. Drugs">
        <title>Protease inhibitors from marine venomous animals and their counterparts in terrestrial venomous animals.</title>
        <authorList>
            <person name="Mourao C.B."/>
            <person name="Schwartz E.F."/>
        </authorList>
    </citation>
    <scope>REVIEW</scope>
    <scope>FUNCTION</scope>
    <scope>SITE LYS-5; LEU-9 AND LYS-19</scope>
</reference>
<reference key="4">
    <citation type="journal article" date="1992" name="J. Mol. Biol.">
        <title>Crystal structure of alpha-dendrotoxin from the green mamba venom and its comparison with the structure of bovine pancreatic trypsin inhibitor.</title>
        <authorList>
            <person name="Skarzynski T."/>
        </authorList>
    </citation>
    <scope>X-RAY CRYSTALLOGRAPHY (2.2 ANGSTROMS)</scope>
</reference>
<proteinExistence type="evidence at protein level"/>
<comment type="function">
    <text evidence="2 3">Serine protease inhibitor homolog that blocks voltage-gated potassium channels (Kv1.1/KCNA1, Kv1.2/KCNA2, and Kv1.6/KCNA6) (IC(50)=0.4-150 nM) and facilitates neurotransmitter release.</text>
</comment>
<comment type="subcellular location">
    <subcellularLocation>
        <location>Secreted</location>
    </subcellularLocation>
</comment>
<comment type="tissue specificity">
    <text>Expressed by the venom gland.</text>
</comment>
<comment type="toxic dose">
    <text>LD(50) is 23 mg/kg by intravenous injection.</text>
</comment>
<comment type="miscellaneous">
    <text>Negative results: does not inhibit serine proteases and voltage-gated potassium channels Kvl.3/KCNA3, Kv1.4/KCNA4, Kv1.5/KCNA5, Kv3.1/KCNC1, Kv3.4/KCNC4, and Kv4.1/KCND1.</text>
</comment>
<comment type="similarity">
    <text evidence="5">Belongs to the venom Kunitz-type family.</text>
</comment>
<dbReference type="PIR" id="A01212">
    <property type="entry name" value="VIEPIA"/>
</dbReference>
<dbReference type="PDB" id="1DTX">
    <property type="method" value="X-ray"/>
    <property type="resolution" value="2.20 A"/>
    <property type="chains" value="A=2-59"/>
</dbReference>
<dbReference type="PDB" id="8VC3">
    <property type="method" value="EM"/>
    <property type="resolution" value="3.20 A"/>
    <property type="chains" value="A=2-59"/>
</dbReference>
<dbReference type="PDBsum" id="1DTX"/>
<dbReference type="PDBsum" id="8VC3"/>
<dbReference type="EMDB" id="EMD-43131"/>
<dbReference type="SMR" id="P00980"/>
<dbReference type="EvolutionaryTrace" id="P00980"/>
<dbReference type="GO" id="GO:0005615">
    <property type="term" value="C:extracellular space"/>
    <property type="evidence" value="ECO:0007669"/>
    <property type="project" value="TreeGrafter"/>
</dbReference>
<dbReference type="GO" id="GO:0015459">
    <property type="term" value="F:potassium channel regulator activity"/>
    <property type="evidence" value="ECO:0007669"/>
    <property type="project" value="UniProtKB-KW"/>
</dbReference>
<dbReference type="GO" id="GO:0004867">
    <property type="term" value="F:serine-type endopeptidase inhibitor activity"/>
    <property type="evidence" value="ECO:0007669"/>
    <property type="project" value="InterPro"/>
</dbReference>
<dbReference type="GO" id="GO:0090729">
    <property type="term" value="F:toxin activity"/>
    <property type="evidence" value="ECO:0007669"/>
    <property type="project" value="UniProtKB-KW"/>
</dbReference>
<dbReference type="CDD" id="cd22595">
    <property type="entry name" value="Kunitz_dendrotoxin"/>
    <property type="match status" value="1"/>
</dbReference>
<dbReference type="Gene3D" id="4.10.410.10">
    <property type="entry name" value="Pancreatic trypsin inhibitor Kunitz domain"/>
    <property type="match status" value="1"/>
</dbReference>
<dbReference type="InterPro" id="IPR002223">
    <property type="entry name" value="Kunitz_BPTI"/>
</dbReference>
<dbReference type="InterPro" id="IPR036880">
    <property type="entry name" value="Kunitz_BPTI_sf"/>
</dbReference>
<dbReference type="InterPro" id="IPR020901">
    <property type="entry name" value="Prtase_inh_Kunz-CS"/>
</dbReference>
<dbReference type="InterPro" id="IPR050098">
    <property type="entry name" value="TFPI/VKTCI-like"/>
</dbReference>
<dbReference type="PANTHER" id="PTHR10083:SF374">
    <property type="entry name" value="BPTI_KUNITZ INHIBITOR DOMAIN-CONTAINING PROTEIN"/>
    <property type="match status" value="1"/>
</dbReference>
<dbReference type="PANTHER" id="PTHR10083">
    <property type="entry name" value="KUNITZ-TYPE PROTEASE INHIBITOR-RELATED"/>
    <property type="match status" value="1"/>
</dbReference>
<dbReference type="Pfam" id="PF00014">
    <property type="entry name" value="Kunitz_BPTI"/>
    <property type="match status" value="1"/>
</dbReference>
<dbReference type="PRINTS" id="PR00759">
    <property type="entry name" value="BASICPTASE"/>
</dbReference>
<dbReference type="SMART" id="SM00131">
    <property type="entry name" value="KU"/>
    <property type="match status" value="1"/>
</dbReference>
<dbReference type="SUPFAM" id="SSF57362">
    <property type="entry name" value="BPTI-like"/>
    <property type="match status" value="1"/>
</dbReference>
<dbReference type="PROSITE" id="PS00280">
    <property type="entry name" value="BPTI_KUNITZ_1"/>
    <property type="match status" value="1"/>
</dbReference>
<dbReference type="PROSITE" id="PS50279">
    <property type="entry name" value="BPTI_KUNITZ_2"/>
    <property type="match status" value="1"/>
</dbReference>
<evidence type="ECO:0000255" key="1">
    <source>
        <dbReference type="PROSITE-ProRule" id="PRU00031"/>
    </source>
</evidence>
<evidence type="ECO:0000269" key="2">
    <source>
    </source>
</evidence>
<evidence type="ECO:0000269" key="3">
    <source>
    </source>
</evidence>
<evidence type="ECO:0000269" key="4">
    <source>
    </source>
</evidence>
<evidence type="ECO:0000305" key="5"/>
<evidence type="ECO:0007829" key="6">
    <source>
        <dbReference type="PDB" id="1DTX"/>
    </source>
</evidence>
<evidence type="ECO:0007829" key="7">
    <source>
        <dbReference type="PDB" id="8VC3"/>
    </source>
</evidence>
<name>VKTHA_DENAN</name>
<keyword id="KW-0002">3D-structure</keyword>
<keyword id="KW-0903">Direct protein sequencing</keyword>
<keyword id="KW-1015">Disulfide bond</keyword>
<keyword id="KW-0872">Ion channel impairing toxin</keyword>
<keyword id="KW-0528">Neurotoxin</keyword>
<keyword id="KW-0632">Potassium channel impairing toxin</keyword>
<keyword id="KW-0873">Pyrrolidone carboxylic acid</keyword>
<keyword id="KW-0964">Secreted</keyword>
<keyword id="KW-0800">Toxin</keyword>
<keyword id="KW-1220">Voltage-gated potassium channel impairing toxin</keyword>
<feature type="chain" id="PRO_0000155433" description="Kunitz-type serine protease inhibitor homolog alpha-dendrotoxin">
    <location>
        <begin position="1"/>
        <end position="59"/>
    </location>
</feature>
<feature type="domain" description="BPTI/Kunitz inhibitor" evidence="1">
    <location>
        <begin position="7"/>
        <end position="57"/>
    </location>
</feature>
<feature type="site" description="May be the major determinant of the binding affinity for potassium channels">
    <location>
        <position position="5"/>
    </location>
</feature>
<feature type="site" description="Important for binding to potassium channels">
    <location>
        <position position="9"/>
    </location>
</feature>
<feature type="site" description="Not important for inhibition of potassium channels">
    <location>
        <position position="19"/>
    </location>
</feature>
<feature type="modified residue" description="Pyrrolidone carboxylic acid" evidence="4">
    <location>
        <position position="1"/>
    </location>
</feature>
<feature type="disulfide bond" evidence="1 4">
    <location>
        <begin position="7"/>
        <end position="57"/>
    </location>
</feature>
<feature type="disulfide bond" evidence="1 4">
    <location>
        <begin position="16"/>
        <end position="40"/>
    </location>
</feature>
<feature type="disulfide bond" evidence="1 4">
    <location>
        <begin position="32"/>
        <end position="53"/>
    </location>
</feature>
<feature type="helix" evidence="6">
    <location>
        <begin position="5"/>
        <end position="8"/>
    </location>
</feature>
<feature type="strand" evidence="6">
    <location>
        <begin position="15"/>
        <end position="17"/>
    </location>
</feature>
<feature type="strand" evidence="6">
    <location>
        <begin position="20"/>
        <end position="26"/>
    </location>
</feature>
<feature type="turn" evidence="6">
    <location>
        <begin position="27"/>
        <end position="30"/>
    </location>
</feature>
<feature type="strand" evidence="6">
    <location>
        <begin position="31"/>
        <end position="37"/>
    </location>
</feature>
<feature type="strand" evidence="7">
    <location>
        <begin position="39"/>
        <end position="41"/>
    </location>
</feature>
<feature type="strand" evidence="6">
    <location>
        <begin position="47"/>
        <end position="49"/>
    </location>
</feature>
<feature type="helix" evidence="6">
    <location>
        <begin position="50"/>
        <end position="57"/>
    </location>
</feature>
<protein>
    <recommendedName>
        <fullName>Kunitz-type serine protease inhibitor homolog alpha-dendrotoxin</fullName>
        <shortName>Alpha-DTX</shortName>
    </recommendedName>
    <alternativeName>
        <fullName>Protease inhibitor 1 homolog</fullName>
    </alternativeName>
    <alternativeName>
        <fullName>Toxin C13S2C3</fullName>
    </alternativeName>
    <alternativeName>
        <fullName>Venom basic protease inhibitor 1 homolog</fullName>
    </alternativeName>
</protein>
<sequence length="59" mass="7071">QPRRKLCILHRNPGRCYDKIPAFYYNQKKKQCERFDWSGCGGNSNRFKTIEECRRTCIG</sequence>